<gene>
    <name evidence="1" type="primary">rplF</name>
    <name type="ordered locus">USA300HOU_2226</name>
</gene>
<keyword id="KW-0687">Ribonucleoprotein</keyword>
<keyword id="KW-0689">Ribosomal protein</keyword>
<keyword id="KW-0694">RNA-binding</keyword>
<keyword id="KW-0699">rRNA-binding</keyword>
<organism>
    <name type="scientific">Staphylococcus aureus (strain USA300 / TCH1516)</name>
    <dbReference type="NCBI Taxonomy" id="451516"/>
    <lineage>
        <taxon>Bacteria</taxon>
        <taxon>Bacillati</taxon>
        <taxon>Bacillota</taxon>
        <taxon>Bacilli</taxon>
        <taxon>Bacillales</taxon>
        <taxon>Staphylococcaceae</taxon>
        <taxon>Staphylococcus</taxon>
    </lineage>
</organism>
<name>RL6_STAAT</name>
<evidence type="ECO:0000255" key="1">
    <source>
        <dbReference type="HAMAP-Rule" id="MF_01365"/>
    </source>
</evidence>
<evidence type="ECO:0000305" key="2"/>
<sequence>MSRVGKKIIDIPSDVTVTFDGNHVTVKGPKGELSRTLNERMTFKQEENTIEVVRPSDSKEDRTNHGTTRALLNNMVQGVSQGYVKVLELVGVGYRAQMQGKDLILNVGYSHPVEIKAEENITFSVEKNTVVKVEGISKEQVGALASNIRSVRPPEPYKGKGIRYQGEYVRRKEGKTGK</sequence>
<dbReference type="EMBL" id="CP000730">
    <property type="protein sequence ID" value="ABX30219.1"/>
    <property type="molecule type" value="Genomic_DNA"/>
</dbReference>
<dbReference type="RefSeq" id="WP_000091975.1">
    <property type="nucleotide sequence ID" value="NC_010079.1"/>
</dbReference>
<dbReference type="SMR" id="A8Z342"/>
<dbReference type="KEGG" id="sax:USA300HOU_2226"/>
<dbReference type="HOGENOM" id="CLU_065464_1_2_9"/>
<dbReference type="GO" id="GO:0022625">
    <property type="term" value="C:cytosolic large ribosomal subunit"/>
    <property type="evidence" value="ECO:0007669"/>
    <property type="project" value="TreeGrafter"/>
</dbReference>
<dbReference type="GO" id="GO:0019843">
    <property type="term" value="F:rRNA binding"/>
    <property type="evidence" value="ECO:0007669"/>
    <property type="project" value="UniProtKB-UniRule"/>
</dbReference>
<dbReference type="GO" id="GO:0003735">
    <property type="term" value="F:structural constituent of ribosome"/>
    <property type="evidence" value="ECO:0007669"/>
    <property type="project" value="InterPro"/>
</dbReference>
<dbReference type="GO" id="GO:0002181">
    <property type="term" value="P:cytoplasmic translation"/>
    <property type="evidence" value="ECO:0007669"/>
    <property type="project" value="TreeGrafter"/>
</dbReference>
<dbReference type="FunFam" id="3.90.930.12:FF:000001">
    <property type="entry name" value="50S ribosomal protein L6"/>
    <property type="match status" value="1"/>
</dbReference>
<dbReference type="FunFam" id="3.90.930.12:FF:000002">
    <property type="entry name" value="50S ribosomal protein L6"/>
    <property type="match status" value="1"/>
</dbReference>
<dbReference type="Gene3D" id="3.90.930.12">
    <property type="entry name" value="Ribosomal protein L6, alpha-beta domain"/>
    <property type="match status" value="2"/>
</dbReference>
<dbReference type="HAMAP" id="MF_01365_B">
    <property type="entry name" value="Ribosomal_uL6_B"/>
    <property type="match status" value="1"/>
</dbReference>
<dbReference type="InterPro" id="IPR000702">
    <property type="entry name" value="Ribosomal_uL6-like"/>
</dbReference>
<dbReference type="InterPro" id="IPR036789">
    <property type="entry name" value="Ribosomal_uL6-like_a/b-dom_sf"/>
</dbReference>
<dbReference type="InterPro" id="IPR020040">
    <property type="entry name" value="Ribosomal_uL6_a/b-dom"/>
</dbReference>
<dbReference type="InterPro" id="IPR019906">
    <property type="entry name" value="Ribosomal_uL6_bac-type"/>
</dbReference>
<dbReference type="InterPro" id="IPR002358">
    <property type="entry name" value="Ribosomal_uL6_CS"/>
</dbReference>
<dbReference type="NCBIfam" id="TIGR03654">
    <property type="entry name" value="L6_bact"/>
    <property type="match status" value="1"/>
</dbReference>
<dbReference type="PANTHER" id="PTHR11655">
    <property type="entry name" value="60S/50S RIBOSOMAL PROTEIN L6/L9"/>
    <property type="match status" value="1"/>
</dbReference>
<dbReference type="PANTHER" id="PTHR11655:SF14">
    <property type="entry name" value="LARGE RIBOSOMAL SUBUNIT PROTEIN UL6M"/>
    <property type="match status" value="1"/>
</dbReference>
<dbReference type="Pfam" id="PF00347">
    <property type="entry name" value="Ribosomal_L6"/>
    <property type="match status" value="2"/>
</dbReference>
<dbReference type="PIRSF" id="PIRSF002162">
    <property type="entry name" value="Ribosomal_L6"/>
    <property type="match status" value="1"/>
</dbReference>
<dbReference type="PRINTS" id="PR00059">
    <property type="entry name" value="RIBOSOMALL6"/>
</dbReference>
<dbReference type="SUPFAM" id="SSF56053">
    <property type="entry name" value="Ribosomal protein L6"/>
    <property type="match status" value="2"/>
</dbReference>
<dbReference type="PROSITE" id="PS00525">
    <property type="entry name" value="RIBOSOMAL_L6_1"/>
    <property type="match status" value="1"/>
</dbReference>
<comment type="function">
    <text evidence="1">This protein binds to the 23S rRNA, and is important in its secondary structure. It is located near the subunit interface in the base of the L7/L12 stalk, and near the tRNA binding site of the peptidyltransferase center.</text>
</comment>
<comment type="subunit">
    <text evidence="1">Part of the 50S ribosomal subunit.</text>
</comment>
<comment type="similarity">
    <text evidence="1">Belongs to the universal ribosomal protein uL6 family.</text>
</comment>
<feature type="chain" id="PRO_1000087070" description="Large ribosomal subunit protein uL6">
    <location>
        <begin position="1"/>
        <end position="178"/>
    </location>
</feature>
<reference key="1">
    <citation type="journal article" date="2007" name="BMC Microbiol.">
        <title>Subtle genetic changes enhance virulence of methicillin resistant and sensitive Staphylococcus aureus.</title>
        <authorList>
            <person name="Highlander S.K."/>
            <person name="Hulten K.G."/>
            <person name="Qin X."/>
            <person name="Jiang H."/>
            <person name="Yerrapragada S."/>
            <person name="Mason E.O. Jr."/>
            <person name="Shang Y."/>
            <person name="Williams T.M."/>
            <person name="Fortunov R.M."/>
            <person name="Liu Y."/>
            <person name="Igboeli O."/>
            <person name="Petrosino J."/>
            <person name="Tirumalai M."/>
            <person name="Uzman A."/>
            <person name="Fox G.E."/>
            <person name="Cardenas A.M."/>
            <person name="Muzny D.M."/>
            <person name="Hemphill L."/>
            <person name="Ding Y."/>
            <person name="Dugan S."/>
            <person name="Blyth P.R."/>
            <person name="Buhay C.J."/>
            <person name="Dinh H.H."/>
            <person name="Hawes A.C."/>
            <person name="Holder M."/>
            <person name="Kovar C.L."/>
            <person name="Lee S.L."/>
            <person name="Liu W."/>
            <person name="Nazareth L.V."/>
            <person name="Wang Q."/>
            <person name="Zhou J."/>
            <person name="Kaplan S.L."/>
            <person name="Weinstock G.M."/>
        </authorList>
    </citation>
    <scope>NUCLEOTIDE SEQUENCE [LARGE SCALE GENOMIC DNA]</scope>
    <source>
        <strain>USA300 / TCH1516</strain>
    </source>
</reference>
<protein>
    <recommendedName>
        <fullName evidence="1">Large ribosomal subunit protein uL6</fullName>
    </recommendedName>
    <alternativeName>
        <fullName evidence="2">50S ribosomal protein L6</fullName>
    </alternativeName>
</protein>
<proteinExistence type="inferred from homology"/>
<accession>A8Z342</accession>